<gene>
    <name evidence="5" type="primary">TAAR365</name>
</gene>
<comment type="function">
    <text evidence="1 4">Olfactory receptor specific for trace amines, such as cadaverine, putrescine and spermine, but not by spermidine or triethylamine (PubMed:34600890). Trace amine compounds are enriched in animal body fluids and act on trace amine-associated receptors (TAARs) to elicit both intraspecific and interspecific innate behaviors (By similarity). Trace amine-binding causes a conformation change that triggers signaling via G(s)-class of G alpha proteins (By similarity).</text>
</comment>
<comment type="subcellular location">
    <subcellularLocation>
        <location evidence="1">Cell membrane</location>
        <topology evidence="1">Multi-pass membrane protein</topology>
    </subcellularLocation>
</comment>
<comment type="tissue specificity">
    <text evidence="4">Specifically expressed in neurons of the olfactory epithelium.</text>
</comment>
<comment type="domain">
    <text evidence="1">In addition to the well known disulfide bond common to G-protein coupled receptor 1 family, trace amine-associated receptors (TAARs) contain an unique disulfide bond (Cys-24-Cys-186) connecting the N-terminus to the extracellular Loop 2 (ECL2), which is required for agonist-induced receptor activation.</text>
</comment>
<comment type="similarity">
    <text evidence="6">Belongs to the G-protein coupled receptor 1 family.</text>
</comment>
<keyword id="KW-1003">Cell membrane</keyword>
<keyword id="KW-1015">Disulfide bond</keyword>
<keyword id="KW-0297">G-protein coupled receptor</keyword>
<keyword id="KW-0472">Membrane</keyword>
<keyword id="KW-0675">Receptor</keyword>
<keyword id="KW-0807">Transducer</keyword>
<keyword id="KW-0812">Transmembrane</keyword>
<keyword id="KW-1133">Transmembrane helix</keyword>
<feature type="chain" id="PRO_0000461210" description="Trace amine-associated receptor 365">
    <location>
        <begin position="1"/>
        <end position="365"/>
    </location>
</feature>
<feature type="topological domain" description="Extracellular" evidence="6">
    <location>
        <begin position="1"/>
        <end position="35"/>
    </location>
</feature>
<feature type="transmembrane region" description="Helical; Name=1" evidence="2">
    <location>
        <begin position="36"/>
        <end position="56"/>
    </location>
</feature>
<feature type="topological domain" description="Cytoplasmic" evidence="6">
    <location>
        <begin position="57"/>
        <end position="70"/>
    </location>
</feature>
<feature type="transmembrane region" description="Helical; Name=2" evidence="2">
    <location>
        <begin position="71"/>
        <end position="91"/>
    </location>
</feature>
<feature type="topological domain" description="Extracellular" evidence="6">
    <location>
        <begin position="92"/>
        <end position="108"/>
    </location>
</feature>
<feature type="transmembrane region" description="Helical; Name=3" evidence="2">
    <location>
        <begin position="109"/>
        <end position="129"/>
    </location>
</feature>
<feature type="topological domain" description="Cytoplasmic" evidence="6">
    <location>
        <begin position="130"/>
        <end position="150"/>
    </location>
</feature>
<feature type="transmembrane region" description="Helical; Name=4" evidence="2">
    <location>
        <begin position="151"/>
        <end position="171"/>
    </location>
</feature>
<feature type="topological domain" description="Extracellular" evidence="6">
    <location>
        <begin position="172"/>
        <end position="195"/>
    </location>
</feature>
<feature type="transmembrane region" description="Helical; Name=5" evidence="2">
    <location>
        <begin position="196"/>
        <end position="216"/>
    </location>
</feature>
<feature type="topological domain" description="Cytoplasmic" evidence="6">
    <location>
        <begin position="217"/>
        <end position="254"/>
    </location>
</feature>
<feature type="transmembrane region" description="Helical; Name=6" evidence="2">
    <location>
        <begin position="255"/>
        <end position="275"/>
    </location>
</feature>
<feature type="topological domain" description="Extracellular" evidence="6">
    <location>
        <begin position="276"/>
        <end position="288"/>
    </location>
</feature>
<feature type="transmembrane region" description="Helical; Name=7" evidence="2">
    <location>
        <begin position="289"/>
        <end position="309"/>
    </location>
</feature>
<feature type="topological domain" description="Cytoplasmic" evidence="6">
    <location>
        <begin position="310"/>
        <end position="365"/>
    </location>
</feature>
<feature type="region of interest" description="Extracellular Loop 2 (ECL2)" evidence="1">
    <location>
        <begin position="175"/>
        <end position="187"/>
    </location>
</feature>
<feature type="disulfide bond" evidence="1">
    <location>
        <begin position="24"/>
        <end position="186"/>
    </location>
</feature>
<feature type="disulfide bond" evidence="3">
    <location>
        <begin position="107"/>
        <end position="186"/>
    </location>
</feature>
<feature type="mutagenesis site" description="Abolished activation following binding to trace-amines." evidence="4">
    <original>D</original>
    <variation>A</variation>
    <variation>N</variation>
    <location>
        <position position="114"/>
    </location>
</feature>
<feature type="mutagenesis site" description="Abolished activation following binding to cadaverine or putrescine." evidence="4">
    <original>Y</original>
    <variation>A</variation>
    <variation>V</variation>
    <location>
        <position position="272"/>
    </location>
</feature>
<feature type="mutagenesis site" description="Abolished activation following binding to spermine." evidence="4">
    <original>E</original>
    <variation>A</variation>
    <variation>Q</variation>
    <variation>D</variation>
    <location>
        <position position="292"/>
    </location>
</feature>
<feature type="mutagenesis site" description="Abolished activation following binding to spermine or putrescine." evidence="4">
    <original>W</original>
    <variation>G</variation>
    <location>
        <position position="296"/>
    </location>
</feature>
<feature type="mutagenesis site" description="Decreased activation following binding to cadaverine or putrescine." evidence="4">
    <original>T</original>
    <variation>S</variation>
    <location>
        <position position="298"/>
    </location>
</feature>
<feature type="mutagenesis site" description="Abolished activation following binding to cadaverine." evidence="4">
    <original>Y</original>
    <variation>F</variation>
    <location>
        <position position="299"/>
    </location>
</feature>
<organism>
    <name type="scientific">Petromyzon marinus</name>
    <name type="common">Sea lamprey</name>
    <dbReference type="NCBI Taxonomy" id="7757"/>
    <lineage>
        <taxon>Eukaryota</taxon>
        <taxon>Metazoa</taxon>
        <taxon>Chordata</taxon>
        <taxon>Craniata</taxon>
        <taxon>Vertebrata</taxon>
        <taxon>Cyclostomata</taxon>
        <taxon>Hyperoartia</taxon>
        <taxon>Petromyzontiformes</taxon>
        <taxon>Petromyzontidae</taxon>
        <taxon>Petromyzon</taxon>
    </lineage>
</organism>
<name>TA365_PETMA</name>
<proteinExistence type="evidence at protein level"/>
<reference key="1">
    <citation type="journal article" date="2019" name="PLoS Biol.">
        <title>Spermine in semen of male sea lamprey acts as a sex pheromone.</title>
        <authorList>
            <person name="Scott A.M."/>
            <person name="Zhang Z."/>
            <person name="Jia L."/>
            <person name="Li K."/>
            <person name="Zhang Q."/>
            <person name="Dexheimer T."/>
            <person name="Ellsworth E."/>
            <person name="Ren J."/>
            <person name="Chung-Davidson Y.W."/>
            <person name="Zu Y."/>
            <person name="Neubig R.R."/>
            <person name="Li W."/>
        </authorList>
    </citation>
    <scope>NUCLEOTIDE SEQUENCE [GENOMIC DNA]</scope>
</reference>
<reference key="2">
    <citation type="journal article" date="2021" name="J. Biol. Chem.">
        <title>Convergent olfactory trace amine-associated receptors detect biogenic polyamines with distinct motifs via a conserved binding site.</title>
        <authorList>
            <person name="Jia L."/>
            <person name="Li S."/>
            <person name="Dai W."/>
            <person name="Guo L."/>
            <person name="Xu Z."/>
            <person name="Scott A.M."/>
            <person name="Zhang Z."/>
            <person name="Ren J."/>
            <person name="Zhang Q."/>
            <person name="Dexheimer T.S."/>
            <person name="Chung-Davidson Y.W."/>
            <person name="Neubig R.R."/>
            <person name="Li Q."/>
            <person name="Li W."/>
        </authorList>
    </citation>
    <scope>FUNCTION</scope>
    <scope>TISSUE SPECIFICITY</scope>
    <scope>MUTAGENESIS OF ASP-114; TYR-272; GLU-292; TRP-296; THR-298 AND TYR-299</scope>
</reference>
<dbReference type="EMBL" id="MH037351">
    <property type="protein sequence ID" value="AZK36082.1"/>
    <property type="molecule type" value="Genomic_DNA"/>
</dbReference>
<dbReference type="SMR" id="A0A678XMK4"/>
<dbReference type="HOGENOM" id="CLU_009579_11_0_1"/>
<dbReference type="OMA" id="HYYENEN"/>
<dbReference type="Proteomes" id="UP001318040">
    <property type="component" value="Unplaced"/>
</dbReference>
<dbReference type="GO" id="GO:0005886">
    <property type="term" value="C:plasma membrane"/>
    <property type="evidence" value="ECO:0007669"/>
    <property type="project" value="UniProtKB-SubCell"/>
</dbReference>
<dbReference type="GO" id="GO:0001594">
    <property type="term" value="F:trace-amine receptor activity"/>
    <property type="evidence" value="ECO:0000314"/>
    <property type="project" value="UniProtKB"/>
</dbReference>
<dbReference type="GO" id="GO:0007186">
    <property type="term" value="P:G protein-coupled receptor signaling pathway"/>
    <property type="evidence" value="ECO:0000314"/>
    <property type="project" value="UniProtKB"/>
</dbReference>
<dbReference type="Gene3D" id="1.20.1070.10">
    <property type="entry name" value="Rhodopsin 7-helix transmembrane proteins"/>
    <property type="match status" value="1"/>
</dbReference>
<dbReference type="InterPro" id="IPR000276">
    <property type="entry name" value="GPCR_Rhodpsn"/>
</dbReference>
<dbReference type="InterPro" id="IPR017452">
    <property type="entry name" value="GPCR_Rhodpsn_7TM"/>
</dbReference>
<dbReference type="InterPro" id="IPR050569">
    <property type="entry name" value="TAAR"/>
</dbReference>
<dbReference type="PANTHER" id="PTHR24249:SF406">
    <property type="entry name" value="G-PROTEIN COUPLED RECEPTORS FAMILY 1 PROFILE DOMAIN-CONTAINING PROTEIN"/>
    <property type="match status" value="1"/>
</dbReference>
<dbReference type="PANTHER" id="PTHR24249">
    <property type="entry name" value="HISTAMINE RECEPTOR-RELATED G-PROTEIN COUPLED RECEPTOR"/>
    <property type="match status" value="1"/>
</dbReference>
<dbReference type="Pfam" id="PF00001">
    <property type="entry name" value="7tm_1"/>
    <property type="match status" value="1"/>
</dbReference>
<dbReference type="PRINTS" id="PR00237">
    <property type="entry name" value="GPCRRHODOPSN"/>
</dbReference>
<dbReference type="SMART" id="SM01381">
    <property type="entry name" value="7TM_GPCR_Srsx"/>
    <property type="match status" value="1"/>
</dbReference>
<dbReference type="SUPFAM" id="SSF81321">
    <property type="entry name" value="Family A G protein-coupled receptor-like"/>
    <property type="match status" value="1"/>
</dbReference>
<dbReference type="PROSITE" id="PS00237">
    <property type="entry name" value="G_PROTEIN_RECEP_F1_1"/>
    <property type="match status" value="1"/>
</dbReference>
<dbReference type="PROSITE" id="PS50262">
    <property type="entry name" value="G_PROTEIN_RECEP_F1_2"/>
    <property type="match status" value="1"/>
</dbReference>
<sequence length="365" mass="41521">METLNESIRNSSLLCVEAFHNFHCTYNDVSEAERAILIAIIIPAIAITIFGNLLTVVSILYFRQLQTRTNVLTLFLAVADLLVGLLIMPFSAMRSVYNCWFYGWTFCKIHSWFDYTLCTLSVLLLSCISFDRYVAISDPLRYHQRITNRTCALMLLFCWLCLPFYGLVFMLEWNLVGLEEELAQICPDDCPVLLNLPFAMANTIFGCVVPMILMTLAYGRIYQLARQQARKITSTAMGSNVDSARSSLRREHSATITMGIIVGVFISLWMPYFVVSTTESIFGYQASSLAWEFINWFTYINSTVNPILFAAFNRPFRNAFYLILSGRIFSSSYRGVDLFNVQHGSKVNQGAKRCVSTLIGKESDR</sequence>
<evidence type="ECO:0000250" key="1">
    <source>
        <dbReference type="UniProtKB" id="Q5QD04"/>
    </source>
</evidence>
<evidence type="ECO:0000255" key="2"/>
<evidence type="ECO:0000255" key="3">
    <source>
        <dbReference type="PROSITE-ProRule" id="PRU00521"/>
    </source>
</evidence>
<evidence type="ECO:0000269" key="4">
    <source>
    </source>
</evidence>
<evidence type="ECO:0000303" key="5">
    <source>
    </source>
</evidence>
<evidence type="ECO:0000305" key="6"/>
<protein>
    <recommendedName>
        <fullName evidence="6">Trace amine-associated receptor 365</fullName>
    </recommendedName>
</protein>
<accession>A0A678XMK4</accession>
<accession>S4R507</accession>